<organism>
    <name type="scientific">Escherichia coli O8 (strain IAI1)</name>
    <dbReference type="NCBI Taxonomy" id="585034"/>
    <lineage>
        <taxon>Bacteria</taxon>
        <taxon>Pseudomonadati</taxon>
        <taxon>Pseudomonadota</taxon>
        <taxon>Gammaproteobacteria</taxon>
        <taxon>Enterobacterales</taxon>
        <taxon>Enterobacteriaceae</taxon>
        <taxon>Escherichia</taxon>
    </lineage>
</organism>
<comment type="catalytic activity">
    <reaction evidence="1">
        <text>(S)-4-amino-5-oxopentanoate = 5-aminolevulinate</text>
        <dbReference type="Rhea" id="RHEA:14265"/>
        <dbReference type="ChEBI" id="CHEBI:57501"/>
        <dbReference type="ChEBI" id="CHEBI:356416"/>
        <dbReference type="EC" id="5.4.3.8"/>
    </reaction>
</comment>
<comment type="cofactor">
    <cofactor evidence="1">
        <name>pyridoxal 5'-phosphate</name>
        <dbReference type="ChEBI" id="CHEBI:597326"/>
    </cofactor>
</comment>
<comment type="pathway">
    <text evidence="1">Porphyrin-containing compound metabolism; protoporphyrin-IX biosynthesis; 5-aminolevulinate from L-glutamyl-tRNA(Glu): step 2/2.</text>
</comment>
<comment type="subunit">
    <text evidence="1">Homodimer.</text>
</comment>
<comment type="subcellular location">
    <subcellularLocation>
        <location evidence="1">Cytoplasm</location>
    </subcellularLocation>
</comment>
<comment type="similarity">
    <text evidence="1">Belongs to the class-III pyridoxal-phosphate-dependent aminotransferase family. HemL subfamily.</text>
</comment>
<accession>B7M195</accession>
<evidence type="ECO:0000255" key="1">
    <source>
        <dbReference type="HAMAP-Rule" id="MF_00375"/>
    </source>
</evidence>
<sequence length="426" mass="45356">MSKSENLYSAARELIPGGVNSPVRAFTGVGGTPLFIEKADGAYLYDVDGKAYIDYVGSWGPMVLGHNHPAIRNAVIEAAERGLSFGAPTEMEVKMAQLVTELVPTMDMVRMVNSGTEATMSAIRLARGFTGRDKIIKFEGCYHGHADCLLVKAGSGALTLGQPNSPGVPADFAKHTLTCTYNDLASVRAAFEQYPQEIACIIVEPVAGNMNCVPPLPEFLPGLRALCDEFGALLIIDEVMTGFRVALAGAQDYYGVEPDLTCLGKIIGGGMPVGAFGGRRDVMDALAPTGPVYQAGTLSGNPIAMAAGFACLNEVAQPGVHETLDELTSRLAEGLLEAAEEAGIPLVVNHVGGMFGIFFTDAESVTCYQDVMACDVERFKRFFHMMLDEGVYLAPSAFEAGFMSVAHSMEDINNTIDAARRVFAKL</sequence>
<reference key="1">
    <citation type="journal article" date="2009" name="PLoS Genet.">
        <title>Organised genome dynamics in the Escherichia coli species results in highly diverse adaptive paths.</title>
        <authorList>
            <person name="Touchon M."/>
            <person name="Hoede C."/>
            <person name="Tenaillon O."/>
            <person name="Barbe V."/>
            <person name="Baeriswyl S."/>
            <person name="Bidet P."/>
            <person name="Bingen E."/>
            <person name="Bonacorsi S."/>
            <person name="Bouchier C."/>
            <person name="Bouvet O."/>
            <person name="Calteau A."/>
            <person name="Chiapello H."/>
            <person name="Clermont O."/>
            <person name="Cruveiller S."/>
            <person name="Danchin A."/>
            <person name="Diard M."/>
            <person name="Dossat C."/>
            <person name="Karoui M.E."/>
            <person name="Frapy E."/>
            <person name="Garry L."/>
            <person name="Ghigo J.M."/>
            <person name="Gilles A.M."/>
            <person name="Johnson J."/>
            <person name="Le Bouguenec C."/>
            <person name="Lescat M."/>
            <person name="Mangenot S."/>
            <person name="Martinez-Jehanne V."/>
            <person name="Matic I."/>
            <person name="Nassif X."/>
            <person name="Oztas S."/>
            <person name="Petit M.A."/>
            <person name="Pichon C."/>
            <person name="Rouy Z."/>
            <person name="Ruf C.S."/>
            <person name="Schneider D."/>
            <person name="Tourret J."/>
            <person name="Vacherie B."/>
            <person name="Vallenet D."/>
            <person name="Medigue C."/>
            <person name="Rocha E.P.C."/>
            <person name="Denamur E."/>
        </authorList>
    </citation>
    <scope>NUCLEOTIDE SEQUENCE [LARGE SCALE GENOMIC DNA]</scope>
    <source>
        <strain>IAI1</strain>
    </source>
</reference>
<name>GSA_ECO8A</name>
<feature type="chain" id="PRO_1000121882" description="Glutamate-1-semialdehyde 2,1-aminomutase">
    <location>
        <begin position="1"/>
        <end position="426"/>
    </location>
</feature>
<feature type="modified residue" description="N6-(pyridoxal phosphate)lysine" evidence="1">
    <location>
        <position position="265"/>
    </location>
</feature>
<proteinExistence type="inferred from homology"/>
<gene>
    <name evidence="1" type="primary">hemL</name>
    <name type="ordered locus">ECIAI1_0152</name>
</gene>
<protein>
    <recommendedName>
        <fullName evidence="1">Glutamate-1-semialdehyde 2,1-aminomutase</fullName>
        <shortName evidence="1">GSA</shortName>
        <ecNumber evidence="1">5.4.3.8</ecNumber>
    </recommendedName>
    <alternativeName>
        <fullName evidence="1">Glutamate-1-semialdehyde aminotransferase</fullName>
        <shortName evidence="1">GSA-AT</shortName>
    </alternativeName>
</protein>
<keyword id="KW-0963">Cytoplasm</keyword>
<keyword id="KW-0413">Isomerase</keyword>
<keyword id="KW-0627">Porphyrin biosynthesis</keyword>
<keyword id="KW-0663">Pyridoxal phosphate</keyword>
<dbReference type="EC" id="5.4.3.8" evidence="1"/>
<dbReference type="EMBL" id="CU928160">
    <property type="protein sequence ID" value="CAQ97041.1"/>
    <property type="molecule type" value="Genomic_DNA"/>
</dbReference>
<dbReference type="RefSeq" id="WP_000045290.1">
    <property type="nucleotide sequence ID" value="NC_011741.1"/>
</dbReference>
<dbReference type="SMR" id="B7M195"/>
<dbReference type="KEGG" id="ecr:ECIAI1_0152"/>
<dbReference type="HOGENOM" id="CLU_016922_1_5_6"/>
<dbReference type="UniPathway" id="UPA00251">
    <property type="reaction ID" value="UER00317"/>
</dbReference>
<dbReference type="GO" id="GO:0005737">
    <property type="term" value="C:cytoplasm"/>
    <property type="evidence" value="ECO:0007669"/>
    <property type="project" value="UniProtKB-SubCell"/>
</dbReference>
<dbReference type="GO" id="GO:0042286">
    <property type="term" value="F:glutamate-1-semialdehyde 2,1-aminomutase activity"/>
    <property type="evidence" value="ECO:0007669"/>
    <property type="project" value="UniProtKB-UniRule"/>
</dbReference>
<dbReference type="GO" id="GO:0030170">
    <property type="term" value="F:pyridoxal phosphate binding"/>
    <property type="evidence" value="ECO:0007669"/>
    <property type="project" value="InterPro"/>
</dbReference>
<dbReference type="GO" id="GO:0008483">
    <property type="term" value="F:transaminase activity"/>
    <property type="evidence" value="ECO:0007669"/>
    <property type="project" value="InterPro"/>
</dbReference>
<dbReference type="GO" id="GO:0006782">
    <property type="term" value="P:protoporphyrinogen IX biosynthetic process"/>
    <property type="evidence" value="ECO:0007669"/>
    <property type="project" value="UniProtKB-UniRule"/>
</dbReference>
<dbReference type="CDD" id="cd00610">
    <property type="entry name" value="OAT_like"/>
    <property type="match status" value="1"/>
</dbReference>
<dbReference type="FunFam" id="3.40.640.10:FF:000021">
    <property type="entry name" value="Glutamate-1-semialdehyde 2,1-aminomutase"/>
    <property type="match status" value="1"/>
</dbReference>
<dbReference type="FunFam" id="3.90.1150.10:FF:000012">
    <property type="entry name" value="Glutamate-1-semialdehyde 2,1-aminomutase"/>
    <property type="match status" value="1"/>
</dbReference>
<dbReference type="Gene3D" id="3.90.1150.10">
    <property type="entry name" value="Aspartate Aminotransferase, domain 1"/>
    <property type="match status" value="1"/>
</dbReference>
<dbReference type="Gene3D" id="3.40.640.10">
    <property type="entry name" value="Type I PLP-dependent aspartate aminotransferase-like (Major domain)"/>
    <property type="match status" value="1"/>
</dbReference>
<dbReference type="HAMAP" id="MF_00375">
    <property type="entry name" value="HemL_aminotrans_3"/>
    <property type="match status" value="1"/>
</dbReference>
<dbReference type="InterPro" id="IPR004639">
    <property type="entry name" value="4pyrrol_synth_GluAld_NH2Trfase"/>
</dbReference>
<dbReference type="InterPro" id="IPR005814">
    <property type="entry name" value="Aminotrans_3"/>
</dbReference>
<dbReference type="InterPro" id="IPR049704">
    <property type="entry name" value="Aminotrans_3_PPA_site"/>
</dbReference>
<dbReference type="InterPro" id="IPR015424">
    <property type="entry name" value="PyrdxlP-dep_Trfase"/>
</dbReference>
<dbReference type="InterPro" id="IPR015421">
    <property type="entry name" value="PyrdxlP-dep_Trfase_major"/>
</dbReference>
<dbReference type="InterPro" id="IPR015422">
    <property type="entry name" value="PyrdxlP-dep_Trfase_small"/>
</dbReference>
<dbReference type="NCBIfam" id="TIGR00713">
    <property type="entry name" value="hemL"/>
    <property type="match status" value="1"/>
</dbReference>
<dbReference type="NCBIfam" id="NF000818">
    <property type="entry name" value="PRK00062.1"/>
    <property type="match status" value="1"/>
</dbReference>
<dbReference type="PANTHER" id="PTHR43713">
    <property type="entry name" value="GLUTAMATE-1-SEMIALDEHYDE 2,1-AMINOMUTASE"/>
    <property type="match status" value="1"/>
</dbReference>
<dbReference type="PANTHER" id="PTHR43713:SF3">
    <property type="entry name" value="GLUTAMATE-1-SEMIALDEHYDE 2,1-AMINOMUTASE 1, CHLOROPLASTIC-RELATED"/>
    <property type="match status" value="1"/>
</dbReference>
<dbReference type="Pfam" id="PF00202">
    <property type="entry name" value="Aminotran_3"/>
    <property type="match status" value="1"/>
</dbReference>
<dbReference type="SUPFAM" id="SSF53383">
    <property type="entry name" value="PLP-dependent transferases"/>
    <property type="match status" value="1"/>
</dbReference>
<dbReference type="PROSITE" id="PS00600">
    <property type="entry name" value="AA_TRANSFER_CLASS_3"/>
    <property type="match status" value="1"/>
</dbReference>